<dbReference type="EMBL" id="AK123355">
    <property type="protein sequence ID" value="BAG53893.1"/>
    <property type="molecule type" value="mRNA"/>
</dbReference>
<dbReference type="EMBL" id="AC115286">
    <property type="status" value="NOT_ANNOTATED_CDS"/>
    <property type="molecule type" value="Genomic_DNA"/>
</dbReference>
<dbReference type="EMBL" id="CH471059">
    <property type="protein sequence ID" value="EAX07445.1"/>
    <property type="molecule type" value="Genomic_DNA"/>
</dbReference>
<dbReference type="EMBL" id="CH471059">
    <property type="protein sequence ID" value="EAX07446.1"/>
    <property type="molecule type" value="Genomic_DNA"/>
</dbReference>
<dbReference type="EMBL" id="BC007637">
    <property type="protein sequence ID" value="AAH07637.1"/>
    <property type="molecule type" value="mRNA"/>
</dbReference>
<dbReference type="EMBL" id="BC064845">
    <property type="protein sequence ID" value="AAH64845.1"/>
    <property type="molecule type" value="mRNA"/>
</dbReference>
<dbReference type="CCDS" id="CCDS381.1">
    <molecule id="Q6P1W5-2"/>
</dbReference>
<dbReference type="CCDS" id="CCDS44108.1">
    <molecule id="Q6P1W5-1"/>
</dbReference>
<dbReference type="RefSeq" id="NP_001128206.1">
    <molecule id="Q6P1W5-1"/>
    <property type="nucleotide sequence ID" value="NM_001134734.2"/>
</dbReference>
<dbReference type="RefSeq" id="NP_116273.2">
    <molecule id="Q6P1W5-2"/>
    <property type="nucleotide sequence ID" value="NM_032884.4"/>
</dbReference>
<dbReference type="BioGRID" id="124400">
    <property type="interactions" value="112"/>
</dbReference>
<dbReference type="FunCoup" id="Q6P1W5">
    <property type="interactions" value="45"/>
</dbReference>
<dbReference type="IntAct" id="Q6P1W5">
    <property type="interactions" value="111"/>
</dbReference>
<dbReference type="MINT" id="Q6P1W5"/>
<dbReference type="STRING" id="9606.ENSP00000435634"/>
<dbReference type="GlyGen" id="Q6P1W5">
    <property type="glycosylation" value="1 site, 1 O-linked glycan (1 site)"/>
</dbReference>
<dbReference type="iPTMnet" id="Q6P1W5"/>
<dbReference type="PhosphoSitePlus" id="Q6P1W5"/>
<dbReference type="BioMuta" id="C1orf94"/>
<dbReference type="DMDM" id="357528782"/>
<dbReference type="jPOST" id="Q6P1W5"/>
<dbReference type="MassIVE" id="Q6P1W5"/>
<dbReference type="PaxDb" id="9606-ENSP00000435634"/>
<dbReference type="PeptideAtlas" id="Q6P1W5"/>
<dbReference type="ProteomicsDB" id="66874">
    <molecule id="Q6P1W5-1"/>
</dbReference>
<dbReference type="ProteomicsDB" id="66875">
    <molecule id="Q6P1W5-2"/>
</dbReference>
<dbReference type="Antibodypedia" id="50310">
    <property type="antibodies" value="44 antibodies from 8 providers"/>
</dbReference>
<dbReference type="DNASU" id="84970"/>
<dbReference type="Ensembl" id="ENST00000373374.7">
    <molecule id="Q6P1W5-2"/>
    <property type="protein sequence ID" value="ENSP00000362472.3"/>
    <property type="gene ID" value="ENSG00000142698.15"/>
</dbReference>
<dbReference type="Ensembl" id="ENST00000488417.2">
    <molecule id="Q6P1W5-1"/>
    <property type="protein sequence ID" value="ENSP00000435634.1"/>
    <property type="gene ID" value="ENSG00000142698.15"/>
</dbReference>
<dbReference type="GeneID" id="84970"/>
<dbReference type="KEGG" id="hsa:84970"/>
<dbReference type="MANE-Select" id="ENST00000488417.2">
    <property type="protein sequence ID" value="ENSP00000435634.1"/>
    <property type="RefSeq nucleotide sequence ID" value="NM_001134734.2"/>
    <property type="RefSeq protein sequence ID" value="NP_001128206.1"/>
</dbReference>
<dbReference type="UCSC" id="uc001bxs.6">
    <molecule id="Q6P1W5-1"/>
    <property type="organism name" value="human"/>
</dbReference>
<dbReference type="AGR" id="HGNC:28250"/>
<dbReference type="CTD" id="84970"/>
<dbReference type="DisGeNET" id="84970"/>
<dbReference type="GeneCards" id="C1orf94"/>
<dbReference type="HGNC" id="HGNC:28250">
    <property type="gene designation" value="C1orf94"/>
</dbReference>
<dbReference type="HPA" id="ENSG00000142698">
    <property type="expression patterns" value="Tissue enriched (testis)"/>
</dbReference>
<dbReference type="neXtProt" id="NX_Q6P1W5"/>
<dbReference type="OpenTargets" id="ENSG00000142698"/>
<dbReference type="PharmGKB" id="PA142672478"/>
<dbReference type="VEuPathDB" id="HostDB:ENSG00000142698"/>
<dbReference type="eggNOG" id="ENOG502QX2U">
    <property type="taxonomic scope" value="Eukaryota"/>
</dbReference>
<dbReference type="GeneTree" id="ENSGT00390000017672"/>
<dbReference type="HOGENOM" id="CLU_032132_0_0_1"/>
<dbReference type="InParanoid" id="Q6P1W5"/>
<dbReference type="OMA" id="KKPAWPA"/>
<dbReference type="OrthoDB" id="9948768at2759"/>
<dbReference type="PAN-GO" id="Q6P1W5">
    <property type="GO annotations" value="0 GO annotations based on evolutionary models"/>
</dbReference>
<dbReference type="PhylomeDB" id="Q6P1W5"/>
<dbReference type="TreeFam" id="TF338566"/>
<dbReference type="PathwayCommons" id="Q6P1W5"/>
<dbReference type="SignaLink" id="Q6P1W5"/>
<dbReference type="BioGRID-ORCS" id="84970">
    <property type="hits" value="15 hits in 1121 CRISPR screens"/>
</dbReference>
<dbReference type="GenomeRNAi" id="84970"/>
<dbReference type="Pharos" id="Q6P1W5">
    <property type="development level" value="Tdark"/>
</dbReference>
<dbReference type="PRO" id="PR:Q6P1W5"/>
<dbReference type="Proteomes" id="UP000005640">
    <property type="component" value="Chromosome 1"/>
</dbReference>
<dbReference type="RNAct" id="Q6P1W5">
    <property type="molecule type" value="protein"/>
</dbReference>
<dbReference type="Bgee" id="ENSG00000142698">
    <property type="expression patterns" value="Expressed in sperm and 46 other cell types or tissues"/>
</dbReference>
<dbReference type="InterPro" id="IPR031496">
    <property type="entry name" value="DUF4688"/>
</dbReference>
<dbReference type="PANTHER" id="PTHR35674">
    <property type="entry name" value="CDNA SEQUENCE CK137956"/>
    <property type="match status" value="1"/>
</dbReference>
<dbReference type="PANTHER" id="PTHR35674:SF1">
    <property type="entry name" value="CDNA SEQUENCE CK137956"/>
    <property type="match status" value="1"/>
</dbReference>
<dbReference type="Pfam" id="PF15752">
    <property type="entry name" value="DUF4688"/>
    <property type="match status" value="1"/>
</dbReference>
<proteinExistence type="evidence at protein level"/>
<comment type="interaction">
    <interactant intactId="EBI-946029">
        <id>Q6P1W5</id>
    </interactant>
    <interactant intactId="EBI-8643161">
        <id>Q9NX04</id>
        <label>AIRIM</label>
    </interactant>
    <organismsDiffer>false</organismsDiffer>
    <experiments>3</experiments>
</comment>
<comment type="interaction">
    <interactant intactId="EBI-946029">
        <id>Q6P1W5</id>
    </interactant>
    <interactant intactId="EBI-9641546">
        <id>Q99996-2</id>
        <label>AKAP9</label>
    </interactant>
    <organismsDiffer>false</organismsDiffer>
    <experiments>3</experiments>
</comment>
<comment type="interaction">
    <interactant intactId="EBI-946029">
        <id>Q6P1W5</id>
    </interactant>
    <interactant intactId="EBI-747353">
        <id>Q8WXE1</id>
        <label>ATRIP</label>
    </interactant>
    <organismsDiffer>false</organismsDiffer>
    <experiments>3</experiments>
</comment>
<comment type="interaction">
    <interactant intactId="EBI-946029">
        <id>Q6P1W5</id>
    </interactant>
    <interactant intactId="EBI-930964">
        <id>P54253</id>
        <label>ATXN1</label>
    </interactant>
    <organismsDiffer>false</organismsDiffer>
    <experiments>18</experiments>
</comment>
<comment type="interaction">
    <interactant intactId="EBI-946029">
        <id>Q6P1W5</id>
    </interactant>
    <interactant intactId="EBI-8624731">
        <id>P0C7T5</id>
        <label>ATXN1L</label>
    </interactant>
    <organismsDiffer>false</organismsDiffer>
    <experiments>3</experiments>
</comment>
<comment type="interaction">
    <interactant intactId="EBI-946029">
        <id>Q6P1W5</id>
    </interactant>
    <interactant intactId="EBI-16429704">
        <id>A0A0S2Z5G4</id>
        <label>BANP</label>
    </interactant>
    <organismsDiffer>false</organismsDiffer>
    <experiments>3</experiments>
</comment>
<comment type="interaction">
    <interactant intactId="EBI-946029">
        <id>Q6P1W5</id>
    </interactant>
    <interactant intactId="EBI-16429313">
        <id>B4DE54</id>
        <label>BANP</label>
    </interactant>
    <organismsDiffer>false</organismsDiffer>
    <experiments>3</experiments>
</comment>
<comment type="interaction">
    <interactant intactId="EBI-946029">
        <id>Q6P1W5</id>
    </interactant>
    <interactant intactId="EBI-744695">
        <id>Q8N9N5</id>
        <label>BANP</label>
    </interactant>
    <organismsDiffer>false</organismsDiffer>
    <experiments>4</experiments>
</comment>
<comment type="interaction">
    <interactant intactId="EBI-946029">
        <id>Q6P1W5</id>
    </interactant>
    <interactant intactId="EBI-11524452">
        <id>Q8N9N5-2</id>
        <label>BANP</label>
    </interactant>
    <organismsDiffer>false</organismsDiffer>
    <experiments>3</experiments>
</comment>
<comment type="interaction">
    <interactant intactId="EBI-946029">
        <id>Q6P1W5</id>
    </interactant>
    <interactant intactId="EBI-1049556">
        <id>Q9Y3E2</id>
        <label>BOLA1</label>
    </interactant>
    <organismsDiffer>false</organismsDiffer>
    <experiments>3</experiments>
</comment>
<comment type="interaction">
    <interactant intactId="EBI-946029">
        <id>Q6P1W5</id>
    </interactant>
    <interactant intactId="EBI-12006120">
        <id>A0A087WZT3</id>
        <label>BOLA2-SMG1P6</label>
    </interactant>
    <organismsDiffer>false</organismsDiffer>
    <experiments>3</experiments>
</comment>
<comment type="interaction">
    <interactant intactId="EBI-946029">
        <id>Q6P1W5</id>
    </interactant>
    <interactant intactId="EBI-998198">
        <id>Q8N9W6</id>
        <label>BOLL</label>
    </interactant>
    <organismsDiffer>false</organismsDiffer>
    <experiments>3</experiments>
</comment>
<comment type="interaction">
    <interactant intactId="EBI-946029">
        <id>Q6P1W5</id>
    </interactant>
    <interactant intactId="EBI-11983447">
        <id>Q8N9W6-4</id>
        <label>BOLL</label>
    </interactant>
    <organismsDiffer>false</organismsDiffer>
    <experiments>3</experiments>
</comment>
<comment type="interaction">
    <interactant intactId="EBI-946029">
        <id>Q6P1W5</id>
    </interactant>
    <interactant intactId="EBI-358049">
        <id>Q13895</id>
        <label>BYSL</label>
    </interactant>
    <organismsDiffer>false</organismsDiffer>
    <experiments>3</experiments>
</comment>
<comment type="interaction">
    <interactant intactId="EBI-946029">
        <id>Q6P1W5</id>
    </interactant>
    <interactant intactId="EBI-1383687">
        <id>Q9UQM7</id>
        <label>CAMK2A</label>
    </interactant>
    <organismsDiffer>false</organismsDiffer>
    <experiments>3</experiments>
</comment>
<comment type="interaction">
    <interactant intactId="EBI-946029">
        <id>Q6P1W5</id>
    </interactant>
    <interactant intactId="EBI-751319">
        <id>Q9H257</id>
        <label>CARD9</label>
    </interactant>
    <organismsDiffer>false</organismsDiffer>
    <experiments>3</experiments>
</comment>
<comment type="interaction">
    <interactant intactId="EBI-946029">
        <id>Q6P1W5</id>
    </interactant>
    <interactant intactId="EBI-10175300">
        <id>Q8TD31-3</id>
        <label>CCHCR1</label>
    </interactant>
    <organismsDiffer>false</organismsDiffer>
    <experiments>4</experiments>
</comment>
<comment type="interaction">
    <interactant intactId="EBI-946029">
        <id>Q6P1W5</id>
    </interactant>
    <interactant intactId="EBI-21668062">
        <id>Q8IV13</id>
        <label>CCNJL</label>
    </interactant>
    <organismsDiffer>false</organismsDiffer>
    <experiments>3</experiments>
</comment>
<comment type="interaction">
    <interactant intactId="EBI-946029">
        <id>Q6P1W5</id>
    </interactant>
    <interactant intactId="EBI-745859">
        <id>P55273</id>
        <label>CDKN2D</label>
    </interactant>
    <organismsDiffer>false</organismsDiffer>
    <experiments>5</experiments>
</comment>
<comment type="interaction">
    <interactant intactId="EBI-946029">
        <id>Q6P1W5</id>
    </interactant>
    <interactant intactId="EBI-749051">
        <id>Q8IYR0</id>
        <label>CFAP206</label>
    </interactant>
    <organismsDiffer>false</organismsDiffer>
    <experiments>4</experiments>
</comment>
<comment type="interaction">
    <interactant intactId="EBI-946029">
        <id>Q6P1W5</id>
    </interactant>
    <interactant intactId="EBI-2555370">
        <id>Q8IWX8</id>
        <label>CHERP</label>
    </interactant>
    <organismsDiffer>false</organismsDiffer>
    <experiments>3</experiments>
</comment>
<comment type="interaction">
    <interactant intactId="EBI-946029">
        <id>Q6P1W5</id>
    </interactant>
    <interactant intactId="EBI-886">
        <id>P46108</id>
        <label>CRK</label>
    </interactant>
    <organismsDiffer>false</organismsDiffer>
    <experiments>3</experiments>
</comment>
<comment type="interaction">
    <interactant intactId="EBI-946029">
        <id>Q6P1W5</id>
    </interactant>
    <interactant intactId="EBI-7519711">
        <id>P53673</id>
        <label>CRYBA4</label>
    </interactant>
    <organismsDiffer>false</organismsDiffer>
    <experiments>3</experiments>
</comment>
<comment type="interaction">
    <interactant intactId="EBI-946029">
        <id>Q6P1W5</id>
    </interactant>
    <interactant intactId="EBI-7875264">
        <id>O75553</id>
        <label>DAB1</label>
    </interactant>
    <organismsDiffer>false</organismsDiffer>
    <experiments>3</experiments>
</comment>
<comment type="interaction">
    <interactant intactId="EBI-946029">
        <id>Q6P1W5</id>
    </interactant>
    <interactant intactId="EBI-724310">
        <id>Q15038</id>
        <label>DAZAP2</label>
    </interactant>
    <organismsDiffer>false</organismsDiffer>
    <experiments>7</experiments>
</comment>
<comment type="interaction">
    <interactant intactId="EBI-946029">
        <id>Q6P1W5</id>
    </interactant>
    <interactant intactId="EBI-2880244">
        <id>Q6PKX4</id>
        <label>DOK6</label>
    </interactant>
    <organismsDiffer>false</organismsDiffer>
    <experiments>3</experiments>
</comment>
<comment type="interaction">
    <interactant intactId="EBI-946029">
        <id>Q6P1W5</id>
    </interactant>
    <interactant intactId="EBI-740376">
        <id>Q86UW9</id>
        <label>DTX2</label>
    </interactant>
    <organismsDiffer>false</organismsDiffer>
    <experiments>3</experiments>
</comment>
<comment type="interaction">
    <interactant intactId="EBI-946029">
        <id>Q6P1W5</id>
    </interactant>
    <interactant intactId="EBI-7957930">
        <id>Q92567</id>
        <label>FAM168A</label>
    </interactant>
    <organismsDiffer>false</organismsDiffer>
    <experiments>3</experiments>
</comment>
<comment type="interaction">
    <interactant intactId="EBI-946029">
        <id>Q6P1W5</id>
    </interactant>
    <interactant intactId="EBI-741101">
        <id>Q13643</id>
        <label>FHL3</label>
    </interactant>
    <organismsDiffer>false</organismsDiffer>
    <experiments>5</experiments>
</comment>
<comment type="interaction">
    <interactant intactId="EBI-946029">
        <id>Q6P1W5</id>
    </interactant>
    <interactant intactId="EBI-746252">
        <id>Q96CN9</id>
        <label>GCC1</label>
    </interactant>
    <organismsDiffer>false</organismsDiffer>
    <experiments>3</experiments>
</comment>
<comment type="interaction">
    <interactant intactId="EBI-946029">
        <id>Q6P1W5</id>
    </interactant>
    <interactant intactId="EBI-739467">
        <id>Q9H8Y8</id>
        <label>GORASP2</label>
    </interactant>
    <organismsDiffer>false</organismsDiffer>
    <experiments>7</experiments>
</comment>
<comment type="interaction">
    <interactant intactId="EBI-946029">
        <id>Q6P1W5</id>
    </interactant>
    <interactant intactId="EBI-401755">
        <id>P62993</id>
        <label>GRB2</label>
    </interactant>
    <organismsDiffer>false</organismsDiffer>
    <experiments>3</experiments>
</comment>
<comment type="interaction">
    <interactant intactId="EBI-946029">
        <id>Q6P1W5</id>
    </interactant>
    <interactant intactId="EBI-372619">
        <id>Q14687</id>
        <label>GSE1</label>
    </interactant>
    <organismsDiffer>false</organismsDiffer>
    <experiments>8</experiments>
</comment>
<comment type="interaction">
    <interactant intactId="EBI-946029">
        <id>Q6P1W5</id>
    </interactant>
    <interactant intactId="EBI-16429135">
        <id>A0A0S2Z4Q4</id>
        <label>HGS</label>
    </interactant>
    <organismsDiffer>false</organismsDiffer>
    <experiments>3</experiments>
</comment>
<comment type="interaction">
    <interactant intactId="EBI-946029">
        <id>Q6P1W5</id>
    </interactant>
    <interactant intactId="EBI-740220">
        <id>O14964</id>
        <label>HGS</label>
    </interactant>
    <organismsDiffer>false</organismsDiffer>
    <experiments>3</experiments>
</comment>
<comment type="interaction">
    <interactant intactId="EBI-946029">
        <id>Q6P1W5</id>
    </interactant>
    <interactant intactId="EBI-352986">
        <id>P52597</id>
        <label>HNRNPF</label>
    </interactant>
    <organismsDiffer>false</organismsDiffer>
    <experiments>6</experiments>
</comment>
<comment type="interaction">
    <interactant intactId="EBI-946029">
        <id>Q6P1W5</id>
    </interactant>
    <interactant intactId="EBI-7116203">
        <id>O75031</id>
        <label>HSF2BP</label>
    </interactant>
    <organismsDiffer>false</organismsDiffer>
    <experiments>3</experiments>
</comment>
<comment type="interaction">
    <interactant intactId="EBI-946029">
        <id>Q6P1W5</id>
    </interactant>
    <interactant intactId="EBI-466029">
        <id>P42858</id>
        <label>HTT</label>
    </interactant>
    <organismsDiffer>false</organismsDiffer>
    <experiments>3</experiments>
</comment>
<comment type="interaction">
    <interactant intactId="EBI-946029">
        <id>Q6P1W5</id>
    </interactant>
    <interactant intactId="EBI-748258">
        <id>Q5TA45</id>
        <label>INTS11</label>
    </interactant>
    <organismsDiffer>false</organismsDiffer>
    <experiments>3</experiments>
</comment>
<comment type="interaction">
    <interactant intactId="EBI-946029">
        <id>Q6P1W5</id>
    </interactant>
    <interactant intactId="EBI-748752">
        <id>Q9UI26</id>
        <label>IPO11</label>
    </interactant>
    <organismsDiffer>false</organismsDiffer>
    <experiments>3</experiments>
</comment>
<comment type="interaction">
    <interactant intactId="EBI-946029">
        <id>Q6P1W5</id>
    </interactant>
    <interactant intactId="EBI-10247181">
        <id>Q5THT1</id>
        <label>KLHL32</label>
    </interactant>
    <organismsDiffer>false</organismsDiffer>
    <experiments>3</experiments>
</comment>
<comment type="interaction">
    <interactant intactId="EBI-946029">
        <id>Q6P1W5</id>
    </interactant>
    <interactant intactId="EBI-11962084">
        <id>Q3LI66</id>
        <label>KRTAP6-2</label>
    </interactant>
    <organismsDiffer>false</organismsDiffer>
    <experiments>3</experiments>
</comment>
<comment type="interaction">
    <interactant intactId="EBI-946029">
        <id>Q6P1W5</id>
    </interactant>
    <interactant intactId="EBI-18394498">
        <id>Q8IUC3</id>
        <label>KRTAP7-1</label>
    </interactant>
    <organismsDiffer>false</organismsDiffer>
    <experiments>3</experiments>
</comment>
<comment type="interaction">
    <interactant intactId="EBI-946029">
        <id>Q6P1W5</id>
    </interactant>
    <interactant intactId="EBI-10261141">
        <id>Q8IUC2</id>
        <label>KRTAP8-1</label>
    </interactant>
    <organismsDiffer>false</organismsDiffer>
    <experiments>3</experiments>
</comment>
<comment type="interaction">
    <interactant intactId="EBI-946029">
        <id>Q6P1W5</id>
    </interactant>
    <interactant intactId="EBI-11973993">
        <id>Q5TA81</id>
        <label>LCE2C</label>
    </interactant>
    <organismsDiffer>false</organismsDiffer>
    <experiments>3</experiments>
</comment>
<comment type="interaction">
    <interactant intactId="EBI-946029">
        <id>Q6P1W5</id>
    </interactant>
    <interactant intactId="EBI-739696">
        <id>P25791</id>
        <label>LMO2</label>
    </interactant>
    <organismsDiffer>false</organismsDiffer>
    <experiments>3</experiments>
</comment>
<comment type="interaction">
    <interactant intactId="EBI-946029">
        <id>Q6P1W5</id>
    </interactant>
    <interactant intactId="EBI-716006">
        <id>Q9Y5V3</id>
        <label>MAGED1</label>
    </interactant>
    <organismsDiffer>false</organismsDiffer>
    <experiments>3</experiments>
</comment>
<comment type="interaction">
    <interactant intactId="EBI-946029">
        <id>Q6P1W5</id>
    </interactant>
    <interactant intactId="EBI-741424">
        <id>Q8NDC0</id>
        <label>MAPK1IP1L</label>
    </interactant>
    <organismsDiffer>false</organismsDiffer>
    <experiments>5</experiments>
</comment>
<comment type="interaction">
    <interactant intactId="EBI-946029">
        <id>Q6P1W5</id>
    </interactant>
    <interactant intactId="EBI-713568">
        <id>P45984</id>
        <label>MAPK9</label>
    </interactant>
    <organismsDiffer>false</organismsDiffer>
    <experiments>3</experiments>
</comment>
<comment type="interaction">
    <interactant intactId="EBI-946029">
        <id>Q6P1W5</id>
    </interactant>
    <interactant intactId="EBI-2804934">
        <id>O14770</id>
        <label>MEIS2</label>
    </interactant>
    <organismsDiffer>false</organismsDiffer>
    <experiments>3</experiments>
</comment>
<comment type="interaction">
    <interactant intactId="EBI-946029">
        <id>Q6P1W5</id>
    </interactant>
    <interactant intactId="EBI-10271199">
        <id>Q8NI38</id>
        <label>NFKBID</label>
    </interactant>
    <organismsDiffer>false</organismsDiffer>
    <experiments>7</experiments>
</comment>
<comment type="interaction">
    <interactant intactId="EBI-946029">
        <id>Q6P1W5</id>
    </interactant>
    <interactant intactId="EBI-10311409">
        <id>Q9NPG2</id>
        <label>NGB</label>
    </interactant>
    <organismsDiffer>false</organismsDiffer>
    <experiments>3</experiments>
</comment>
<comment type="interaction">
    <interactant intactId="EBI-946029">
        <id>Q6P1W5</id>
    </interactant>
    <interactant intactId="EBI-10281601">
        <id>Q9UMX2</id>
        <label>OAZ3</label>
    </interactant>
    <organismsDiffer>false</organismsDiffer>
    <experiments>4</experiments>
</comment>
<comment type="interaction">
    <interactant intactId="EBI-946029">
        <id>Q6P1W5</id>
    </interactant>
    <interactant intactId="EBI-536879">
        <id>O43482</id>
        <label>OIP5</label>
    </interactant>
    <organismsDiffer>false</organismsDiffer>
    <experiments>6</experiments>
</comment>
<comment type="interaction">
    <interactant intactId="EBI-946029">
        <id>Q6P1W5</id>
    </interactant>
    <interactant intactId="EBI-726466">
        <id>O15496</id>
        <label>PLA2G10</label>
    </interactant>
    <organismsDiffer>false</organismsDiffer>
    <experiments>3</experiments>
</comment>
<comment type="interaction">
    <interactant intactId="EBI-946029">
        <id>Q6P1W5</id>
    </interactant>
    <interactant intactId="EBI-373552">
        <id>Q96CS7</id>
        <label>PLEKHB2</label>
    </interactant>
    <organismsDiffer>false</organismsDiffer>
    <experiments>6</experiments>
</comment>
<comment type="interaction">
    <interactant intactId="EBI-946029">
        <id>Q6P1W5</id>
    </interactant>
    <interactant intactId="EBI-1181439">
        <id>P54619</id>
        <label>PRKAG1</label>
    </interactant>
    <organismsDiffer>false</organismsDiffer>
    <experiments>3</experiments>
</comment>
<comment type="interaction">
    <interactant intactId="EBI-946029">
        <id>Q6P1W5</id>
    </interactant>
    <interactant intactId="EBI-9027467">
        <id>O75360</id>
        <label>PROP1</label>
    </interactant>
    <organismsDiffer>false</organismsDiffer>
    <experiments>3</experiments>
</comment>
<comment type="interaction">
    <interactant intactId="EBI-946029">
        <id>Q6P1W5</id>
    </interactant>
    <interactant intactId="EBI-10172814">
        <id>P86479</id>
        <label>PRR20C</label>
    </interactant>
    <organismsDiffer>false</organismsDiffer>
    <experiments>3</experiments>
</comment>
<comment type="interaction">
    <interactant intactId="EBI-946029">
        <id>Q6P1W5</id>
    </interactant>
    <interactant intactId="EBI-12754095">
        <id>P86480</id>
        <label>PRR20D</label>
    </interactant>
    <organismsDiffer>false</organismsDiffer>
    <experiments>3</experiments>
</comment>
<comment type="interaction">
    <interactant intactId="EBI-946029">
        <id>Q6P1W5</id>
    </interactant>
    <interactant intactId="EBI-10326419">
        <id>Q9Y2K5-2</id>
        <label>R3HDM2</label>
    </interactant>
    <organismsDiffer>false</organismsDiffer>
    <experiments>3</experiments>
</comment>
<comment type="interaction">
    <interactant intactId="EBI-946029">
        <id>Q6P1W5</id>
    </interactant>
    <interactant intactId="EBI-1055693">
        <id>O75771</id>
        <label>RAD51D</label>
    </interactant>
    <organismsDiffer>false</organismsDiffer>
    <experiments>6</experiments>
</comment>
<comment type="interaction">
    <interactant intactId="EBI-946029">
        <id>Q6P1W5</id>
    </interactant>
    <interactant intactId="EBI-945906">
        <id>Q9NWB1</id>
        <label>RBFOX1</label>
    </interactant>
    <organismsDiffer>false</organismsDiffer>
    <experiments>3</experiments>
</comment>
<comment type="interaction">
    <interactant intactId="EBI-946029">
        <id>Q6P1W5</id>
    </interactant>
    <interactant intactId="EBI-746056">
        <id>O43251</id>
        <label>RBFOX2</label>
    </interactant>
    <organismsDiffer>false</organismsDiffer>
    <experiments>3</experiments>
</comment>
<comment type="interaction">
    <interactant intactId="EBI-946029">
        <id>Q6P1W5</id>
    </interactant>
    <interactant intactId="EBI-2823850">
        <id>A0AV96</id>
        <label>RBM47</label>
    </interactant>
    <organismsDiffer>false</organismsDiffer>
    <experiments>3</experiments>
</comment>
<comment type="interaction">
    <interactant intactId="EBI-946029">
        <id>Q6P1W5</id>
    </interactant>
    <interactant intactId="EBI-10176148">
        <id>B7ZLP7</id>
        <label>RBM47</label>
    </interactant>
    <organismsDiffer>false</organismsDiffer>
    <experiments>3</experiments>
</comment>
<comment type="interaction">
    <interactant intactId="EBI-946029">
        <id>Q6P1W5</id>
    </interactant>
    <interactant intactId="EBI-740322">
        <id>Q93062</id>
        <label>RBPMS</label>
    </interactant>
    <organismsDiffer>false</organismsDiffer>
    <experiments>4</experiments>
</comment>
<comment type="interaction">
    <interactant intactId="EBI-946029">
        <id>Q6P1W5</id>
    </interactant>
    <interactant intactId="EBI-372094">
        <id>Q9BQY4</id>
        <label>RHOXF2</label>
    </interactant>
    <organismsDiffer>false</organismsDiffer>
    <experiments>3</experiments>
</comment>
<comment type="interaction">
    <interactant intactId="EBI-946029">
        <id>Q6P1W5</id>
    </interactant>
    <interactant intactId="EBI-10172778">
        <id>A1L4F5</id>
        <label>ROR2</label>
    </interactant>
    <organismsDiffer>false</organismsDiffer>
    <experiments>3</experiments>
</comment>
<comment type="interaction">
    <interactant intactId="EBI-946029">
        <id>Q6P1W5</id>
    </interactant>
    <interactant intactId="EBI-6422642">
        <id>Q01974</id>
        <label>ROR2</label>
    </interactant>
    <organismsDiffer>false</organismsDiffer>
    <experiments>3</experiments>
</comment>
<comment type="interaction">
    <interactant intactId="EBI-946029">
        <id>Q6P1W5</id>
    </interactant>
    <interactant intactId="EBI-2822515">
        <id>Q8WU79</id>
        <label>SMAP2</label>
    </interactant>
    <organismsDiffer>false</organismsDiffer>
    <experiments>3</experiments>
</comment>
<comment type="interaction">
    <interactant intactId="EBI-946029">
        <id>Q6P1W5</id>
    </interactant>
    <interactant intactId="EBI-12035119">
        <id>O75177-5</id>
        <label>SS18L1</label>
    </interactant>
    <organismsDiffer>false</organismsDiffer>
    <experiments>3</experiments>
</comment>
<comment type="interaction">
    <interactant intactId="EBI-946029">
        <id>Q6P1W5</id>
    </interactant>
    <interactant intactId="EBI-2824328">
        <id>O95947</id>
        <label>TBX6</label>
    </interactant>
    <organismsDiffer>false</organismsDiffer>
    <experiments>4</experiments>
</comment>
<comment type="interaction">
    <interactant intactId="EBI-946029">
        <id>Q6P1W5</id>
    </interactant>
    <interactant intactId="EBI-744726">
        <id>Q8NEK8</id>
        <label>TENT5D</label>
    </interactant>
    <organismsDiffer>false</organismsDiffer>
    <experiments>3</experiments>
</comment>
<comment type="interaction">
    <interactant intactId="EBI-946029">
        <id>Q6P1W5</id>
    </interactant>
    <interactant intactId="EBI-717810">
        <id>Q08117</id>
        <label>TLE5</label>
    </interactant>
    <organismsDiffer>false</organismsDiffer>
    <experiments>3</experiments>
</comment>
<comment type="interaction">
    <interactant intactId="EBI-946029">
        <id>Q6P1W5</id>
    </interactant>
    <interactant intactId="EBI-11741437">
        <id>Q08117-2</id>
        <label>TLE5</label>
    </interactant>
    <organismsDiffer>false</organismsDiffer>
    <experiments>3</experiments>
</comment>
<comment type="interaction">
    <interactant intactId="EBI-946029">
        <id>Q6P1W5</id>
    </interactant>
    <interactant intactId="EBI-431907">
        <id>O14787</id>
        <label>TNPO2</label>
    </interactant>
    <organismsDiffer>false</organismsDiffer>
    <experiments>3</experiments>
</comment>
<comment type="interaction">
    <interactant intactId="EBI-946029">
        <id>Q6P1W5</id>
    </interactant>
    <interactant intactId="EBI-949753">
        <id>Q63HR2</id>
        <label>TNS2</label>
    </interactant>
    <organismsDiffer>false</organismsDiffer>
    <experiments>3</experiments>
</comment>
<comment type="interaction">
    <interactant intactId="EBI-946029">
        <id>Q6P1W5</id>
    </interactant>
    <interactant intactId="EBI-12806590">
        <id>Q86WV8</id>
        <label>TSC1</label>
    </interactant>
    <organismsDiffer>false</organismsDiffer>
    <experiments>3</experiments>
</comment>
<comment type="interaction">
    <interactant intactId="EBI-946029">
        <id>Q6P1W5</id>
    </interactant>
    <interactant intactId="EBI-707554">
        <id>O14530</id>
        <label>TXNDC9</label>
    </interactant>
    <organismsDiffer>false</organismsDiffer>
    <experiments>3</experiments>
</comment>
<comment type="interaction">
    <interactant intactId="EBI-946029">
        <id>Q6P1W5</id>
    </interactant>
    <interactant intactId="EBI-947187">
        <id>Q9UHD9</id>
        <label>UBQLN2</label>
    </interactant>
    <organismsDiffer>false</organismsDiffer>
    <experiments>3</experiments>
</comment>
<comment type="interaction">
    <interactant intactId="EBI-946029">
        <id>Q6P1W5</id>
    </interactant>
    <interactant intactId="EBI-10191303">
        <id>O95231</id>
        <label>VENTX</label>
    </interactant>
    <organismsDiffer>false</organismsDiffer>
    <experiments>4</experiments>
</comment>
<comment type="interaction">
    <interactant intactId="EBI-946029">
        <id>Q6P1W5</id>
    </interactant>
    <interactant intactId="EBI-2559305">
        <id>A5D8V6</id>
        <label>VPS37C</label>
    </interactant>
    <organismsDiffer>false</organismsDiffer>
    <experiments>6</experiments>
</comment>
<comment type="interaction">
    <interactant intactId="EBI-946029">
        <id>Q6P1W5</id>
    </interactant>
    <interactant intactId="EBI-515331">
        <id>P07947</id>
        <label>YES1</label>
    </interactant>
    <organismsDiffer>false</organismsDiffer>
    <experiments>3</experiments>
</comment>
<comment type="interaction">
    <interactant intactId="EBI-946029">
        <id>Q6P1W5</id>
    </interactant>
    <interactant intactId="EBI-10175581">
        <id>B2R8Y4</id>
    </interactant>
    <organismsDiffer>false</organismsDiffer>
    <experiments>3</experiments>
</comment>
<comment type="interaction">
    <interactant intactId="EBI-946029">
        <id>Q6P1W5</id>
    </interactant>
    <interactant intactId="EBI-3957603">
        <id>P09022</id>
        <label>Hoxa1</label>
    </interactant>
    <organismsDiffer>true</organismsDiffer>
    <experiments>3</experiments>
</comment>
<comment type="alternative products">
    <event type="alternative splicing"/>
    <isoform>
        <id>Q6P1W5-1</id>
        <name>1</name>
        <sequence type="displayed"/>
    </isoform>
    <isoform>
        <id>Q6P1W5-2</id>
        <name>2</name>
        <sequence type="described" ref="VSP_042032"/>
    </isoform>
</comment>
<feature type="chain" id="PRO_0000280097" description="Uncharacterized protein C1orf94">
    <location>
        <begin position="1"/>
        <end position="598"/>
    </location>
</feature>
<feature type="splice variant" id="VSP_042032" description="In isoform 2." evidence="2 3">
    <location>
        <begin position="1"/>
        <end position="190"/>
    </location>
</feature>
<feature type="sequence variant" id="VAR_031051" description="In dbSNP:rs1382602." evidence="1">
    <original>Q</original>
    <variation>E</variation>
    <location>
        <position position="235"/>
    </location>
</feature>
<feature type="sequence variant" id="VAR_031052" description="In dbSNP:rs1414474." evidence="1">
    <original>D</original>
    <variation>E</variation>
    <location>
        <position position="302"/>
    </location>
</feature>
<feature type="sequence variant" id="VAR_050702" description="In dbSNP:rs17556981.">
    <original>Y</original>
    <variation>H</variation>
    <location>
        <position position="438"/>
    </location>
</feature>
<name>CA094_HUMAN</name>
<accession>Q6P1W5</accession>
<accession>B3KVT1</accession>
<accession>D3DPR3</accession>
<accession>E9PJ76</accession>
<accession>Q96IC8</accession>
<gene>
    <name type="primary">C1orf94</name>
</gene>
<keyword id="KW-0025">Alternative splicing</keyword>
<keyword id="KW-1267">Proteomics identification</keyword>
<keyword id="KW-1185">Reference proteome</keyword>
<protein>
    <recommendedName>
        <fullName>Uncharacterized protein C1orf94</fullName>
    </recommendedName>
</protein>
<organism>
    <name type="scientific">Homo sapiens</name>
    <name type="common">Human</name>
    <dbReference type="NCBI Taxonomy" id="9606"/>
    <lineage>
        <taxon>Eukaryota</taxon>
        <taxon>Metazoa</taxon>
        <taxon>Chordata</taxon>
        <taxon>Craniata</taxon>
        <taxon>Vertebrata</taxon>
        <taxon>Euteleostomi</taxon>
        <taxon>Mammalia</taxon>
        <taxon>Eutheria</taxon>
        <taxon>Euarchontoglires</taxon>
        <taxon>Primates</taxon>
        <taxon>Haplorrhini</taxon>
        <taxon>Catarrhini</taxon>
        <taxon>Hominidae</taxon>
        <taxon>Homo</taxon>
    </lineage>
</organism>
<sequence>MRGGGGCVLALGGQRGFQKERRRMASGNGLPSSSALVAKGPCALGPFPRYIWIHQDTPQDSLDKTCHEIWKRVQGLPEASQPWTSMEQLSVPVVGTLRGNELSFQEEALELSSGKDEISLLVEQEFLSLTKEHSILVEESSGELEVPGSSPEGTRELAPCILAPPLVAGSNERPRASIIVGDKLLKQKVAMPVISSRQDCDSATSTVTDILCAAEVKSSKGTEDRGRILGDSNLQVSKLLSQFPLKSTETSKVPDNKNVLDKTRVTKDFLQDNLFSGPGPKEPTGLSPFLLLPPRPPPARPDKLPELPAQKRQLPVFAKICSKPKADPAVERHHLMEWSPGTKEPKKGQGSLFLSQWPQSQKDACGEEGCCDAVGTASLTLPPKKPTCPAEKNLLYEFLGATKNPSGQPRLRNKVEVDGPELKFNAPVTVADKNNPKYTGNVFTPHFPTAMTSATLNQPLWLNLNYPPPPVFTNHSTFLQYQGLYPQQAARMPYQQALHPQLGCYSQQVMPYNPQQMGQQIFRSSYTPLLSYIPFVQPNYPYPQRTPPKMSANPRDPPLMAGDGPQYLFPQGYGFGSTSGGPLMHSPYFSSSGNGINF</sequence>
<evidence type="ECO:0000269" key="1">
    <source>
    </source>
</evidence>
<evidence type="ECO:0000303" key="2">
    <source>
    </source>
</evidence>
<evidence type="ECO:0000303" key="3">
    <source>
    </source>
</evidence>
<reference key="1">
    <citation type="journal article" date="2004" name="Nat. Genet.">
        <title>Complete sequencing and characterization of 21,243 full-length human cDNAs.</title>
        <authorList>
            <person name="Ota T."/>
            <person name="Suzuki Y."/>
            <person name="Nishikawa T."/>
            <person name="Otsuki T."/>
            <person name="Sugiyama T."/>
            <person name="Irie R."/>
            <person name="Wakamatsu A."/>
            <person name="Hayashi K."/>
            <person name="Sato H."/>
            <person name="Nagai K."/>
            <person name="Kimura K."/>
            <person name="Makita H."/>
            <person name="Sekine M."/>
            <person name="Obayashi M."/>
            <person name="Nishi T."/>
            <person name="Shibahara T."/>
            <person name="Tanaka T."/>
            <person name="Ishii S."/>
            <person name="Yamamoto J."/>
            <person name="Saito K."/>
            <person name="Kawai Y."/>
            <person name="Isono Y."/>
            <person name="Nakamura Y."/>
            <person name="Nagahari K."/>
            <person name="Murakami K."/>
            <person name="Yasuda T."/>
            <person name="Iwayanagi T."/>
            <person name="Wagatsuma M."/>
            <person name="Shiratori A."/>
            <person name="Sudo H."/>
            <person name="Hosoiri T."/>
            <person name="Kaku Y."/>
            <person name="Kodaira H."/>
            <person name="Kondo H."/>
            <person name="Sugawara M."/>
            <person name="Takahashi M."/>
            <person name="Kanda K."/>
            <person name="Yokoi T."/>
            <person name="Furuya T."/>
            <person name="Kikkawa E."/>
            <person name="Omura Y."/>
            <person name="Abe K."/>
            <person name="Kamihara K."/>
            <person name="Katsuta N."/>
            <person name="Sato K."/>
            <person name="Tanikawa M."/>
            <person name="Yamazaki M."/>
            <person name="Ninomiya K."/>
            <person name="Ishibashi T."/>
            <person name="Yamashita H."/>
            <person name="Murakawa K."/>
            <person name="Fujimori K."/>
            <person name="Tanai H."/>
            <person name="Kimata M."/>
            <person name="Watanabe M."/>
            <person name="Hiraoka S."/>
            <person name="Chiba Y."/>
            <person name="Ishida S."/>
            <person name="Ono Y."/>
            <person name="Takiguchi S."/>
            <person name="Watanabe S."/>
            <person name="Yosida M."/>
            <person name="Hotuta T."/>
            <person name="Kusano J."/>
            <person name="Kanehori K."/>
            <person name="Takahashi-Fujii A."/>
            <person name="Hara H."/>
            <person name="Tanase T.-O."/>
            <person name="Nomura Y."/>
            <person name="Togiya S."/>
            <person name="Komai F."/>
            <person name="Hara R."/>
            <person name="Takeuchi K."/>
            <person name="Arita M."/>
            <person name="Imose N."/>
            <person name="Musashino K."/>
            <person name="Yuuki H."/>
            <person name="Oshima A."/>
            <person name="Sasaki N."/>
            <person name="Aotsuka S."/>
            <person name="Yoshikawa Y."/>
            <person name="Matsunawa H."/>
            <person name="Ichihara T."/>
            <person name="Shiohata N."/>
            <person name="Sano S."/>
            <person name="Moriya S."/>
            <person name="Momiyama H."/>
            <person name="Satoh N."/>
            <person name="Takami S."/>
            <person name="Terashima Y."/>
            <person name="Suzuki O."/>
            <person name="Nakagawa S."/>
            <person name="Senoh A."/>
            <person name="Mizoguchi H."/>
            <person name="Goto Y."/>
            <person name="Shimizu F."/>
            <person name="Wakebe H."/>
            <person name="Hishigaki H."/>
            <person name="Watanabe T."/>
            <person name="Sugiyama A."/>
            <person name="Takemoto M."/>
            <person name="Kawakami B."/>
            <person name="Yamazaki M."/>
            <person name="Watanabe K."/>
            <person name="Kumagai A."/>
            <person name="Itakura S."/>
            <person name="Fukuzumi Y."/>
            <person name="Fujimori Y."/>
            <person name="Komiyama M."/>
            <person name="Tashiro H."/>
            <person name="Tanigami A."/>
            <person name="Fujiwara T."/>
            <person name="Ono T."/>
            <person name="Yamada K."/>
            <person name="Fujii Y."/>
            <person name="Ozaki K."/>
            <person name="Hirao M."/>
            <person name="Ohmori Y."/>
            <person name="Kawabata A."/>
            <person name="Hikiji T."/>
            <person name="Kobatake N."/>
            <person name="Inagaki H."/>
            <person name="Ikema Y."/>
            <person name="Okamoto S."/>
            <person name="Okitani R."/>
            <person name="Kawakami T."/>
            <person name="Noguchi S."/>
            <person name="Itoh T."/>
            <person name="Shigeta K."/>
            <person name="Senba T."/>
            <person name="Matsumura K."/>
            <person name="Nakajima Y."/>
            <person name="Mizuno T."/>
            <person name="Morinaga M."/>
            <person name="Sasaki M."/>
            <person name="Togashi T."/>
            <person name="Oyama M."/>
            <person name="Hata H."/>
            <person name="Watanabe M."/>
            <person name="Komatsu T."/>
            <person name="Mizushima-Sugano J."/>
            <person name="Satoh T."/>
            <person name="Shirai Y."/>
            <person name="Takahashi Y."/>
            <person name="Nakagawa K."/>
            <person name="Okumura K."/>
            <person name="Nagase T."/>
            <person name="Nomura N."/>
            <person name="Kikuchi H."/>
            <person name="Masuho Y."/>
            <person name="Yamashita R."/>
            <person name="Nakai K."/>
            <person name="Yada T."/>
            <person name="Nakamura Y."/>
            <person name="Ohara O."/>
            <person name="Isogai T."/>
            <person name="Sugano S."/>
        </authorList>
    </citation>
    <scope>NUCLEOTIDE SEQUENCE [LARGE SCALE MRNA] (ISOFORM 2)</scope>
    <source>
        <tissue>Caudate nucleus</tissue>
    </source>
</reference>
<reference key="2">
    <citation type="journal article" date="2006" name="Nature">
        <title>The DNA sequence and biological annotation of human chromosome 1.</title>
        <authorList>
            <person name="Gregory S.G."/>
            <person name="Barlow K.F."/>
            <person name="McLay K.E."/>
            <person name="Kaul R."/>
            <person name="Swarbreck D."/>
            <person name="Dunham A."/>
            <person name="Scott C.E."/>
            <person name="Howe K.L."/>
            <person name="Woodfine K."/>
            <person name="Spencer C.C.A."/>
            <person name="Jones M.C."/>
            <person name="Gillson C."/>
            <person name="Searle S."/>
            <person name="Zhou Y."/>
            <person name="Kokocinski F."/>
            <person name="McDonald L."/>
            <person name="Evans R."/>
            <person name="Phillips K."/>
            <person name="Atkinson A."/>
            <person name="Cooper R."/>
            <person name="Jones C."/>
            <person name="Hall R.E."/>
            <person name="Andrews T.D."/>
            <person name="Lloyd C."/>
            <person name="Ainscough R."/>
            <person name="Almeida J.P."/>
            <person name="Ambrose K.D."/>
            <person name="Anderson F."/>
            <person name="Andrew R.W."/>
            <person name="Ashwell R.I.S."/>
            <person name="Aubin K."/>
            <person name="Babbage A.K."/>
            <person name="Bagguley C.L."/>
            <person name="Bailey J."/>
            <person name="Beasley H."/>
            <person name="Bethel G."/>
            <person name="Bird C.P."/>
            <person name="Bray-Allen S."/>
            <person name="Brown J.Y."/>
            <person name="Brown A.J."/>
            <person name="Buckley D."/>
            <person name="Burton J."/>
            <person name="Bye J."/>
            <person name="Carder C."/>
            <person name="Chapman J.C."/>
            <person name="Clark S.Y."/>
            <person name="Clarke G."/>
            <person name="Clee C."/>
            <person name="Cobley V."/>
            <person name="Collier R.E."/>
            <person name="Corby N."/>
            <person name="Coville G.J."/>
            <person name="Davies J."/>
            <person name="Deadman R."/>
            <person name="Dunn M."/>
            <person name="Earthrowl M."/>
            <person name="Ellington A.G."/>
            <person name="Errington H."/>
            <person name="Frankish A."/>
            <person name="Frankland J."/>
            <person name="French L."/>
            <person name="Garner P."/>
            <person name="Garnett J."/>
            <person name="Gay L."/>
            <person name="Ghori M.R.J."/>
            <person name="Gibson R."/>
            <person name="Gilby L.M."/>
            <person name="Gillett W."/>
            <person name="Glithero R.J."/>
            <person name="Grafham D.V."/>
            <person name="Griffiths C."/>
            <person name="Griffiths-Jones S."/>
            <person name="Grocock R."/>
            <person name="Hammond S."/>
            <person name="Harrison E.S.I."/>
            <person name="Hart E."/>
            <person name="Haugen E."/>
            <person name="Heath P.D."/>
            <person name="Holmes S."/>
            <person name="Holt K."/>
            <person name="Howden P.J."/>
            <person name="Hunt A.R."/>
            <person name="Hunt S.E."/>
            <person name="Hunter G."/>
            <person name="Isherwood J."/>
            <person name="James R."/>
            <person name="Johnson C."/>
            <person name="Johnson D."/>
            <person name="Joy A."/>
            <person name="Kay M."/>
            <person name="Kershaw J.K."/>
            <person name="Kibukawa M."/>
            <person name="Kimberley A.M."/>
            <person name="King A."/>
            <person name="Knights A.J."/>
            <person name="Lad H."/>
            <person name="Laird G."/>
            <person name="Lawlor S."/>
            <person name="Leongamornlert D.A."/>
            <person name="Lloyd D.M."/>
            <person name="Loveland J."/>
            <person name="Lovell J."/>
            <person name="Lush M.J."/>
            <person name="Lyne R."/>
            <person name="Martin S."/>
            <person name="Mashreghi-Mohammadi M."/>
            <person name="Matthews L."/>
            <person name="Matthews N.S.W."/>
            <person name="McLaren S."/>
            <person name="Milne S."/>
            <person name="Mistry S."/>
            <person name="Moore M.J.F."/>
            <person name="Nickerson T."/>
            <person name="O'Dell C.N."/>
            <person name="Oliver K."/>
            <person name="Palmeiri A."/>
            <person name="Palmer S.A."/>
            <person name="Parker A."/>
            <person name="Patel D."/>
            <person name="Pearce A.V."/>
            <person name="Peck A.I."/>
            <person name="Pelan S."/>
            <person name="Phelps K."/>
            <person name="Phillimore B.J."/>
            <person name="Plumb R."/>
            <person name="Rajan J."/>
            <person name="Raymond C."/>
            <person name="Rouse G."/>
            <person name="Saenphimmachak C."/>
            <person name="Sehra H.K."/>
            <person name="Sheridan E."/>
            <person name="Shownkeen R."/>
            <person name="Sims S."/>
            <person name="Skuce C.D."/>
            <person name="Smith M."/>
            <person name="Steward C."/>
            <person name="Subramanian S."/>
            <person name="Sycamore N."/>
            <person name="Tracey A."/>
            <person name="Tromans A."/>
            <person name="Van Helmond Z."/>
            <person name="Wall M."/>
            <person name="Wallis J.M."/>
            <person name="White S."/>
            <person name="Whitehead S.L."/>
            <person name="Wilkinson J.E."/>
            <person name="Willey D.L."/>
            <person name="Williams H."/>
            <person name="Wilming L."/>
            <person name="Wray P.W."/>
            <person name="Wu Z."/>
            <person name="Coulson A."/>
            <person name="Vaudin M."/>
            <person name="Sulston J.E."/>
            <person name="Durbin R.M."/>
            <person name="Hubbard T."/>
            <person name="Wooster R."/>
            <person name="Dunham I."/>
            <person name="Carter N.P."/>
            <person name="McVean G."/>
            <person name="Ross M.T."/>
            <person name="Harrow J."/>
            <person name="Olson M.V."/>
            <person name="Beck S."/>
            <person name="Rogers J."/>
            <person name="Bentley D.R."/>
        </authorList>
    </citation>
    <scope>NUCLEOTIDE SEQUENCE [LARGE SCALE GENOMIC DNA]</scope>
</reference>
<reference key="3">
    <citation type="submission" date="2005-09" db="EMBL/GenBank/DDBJ databases">
        <authorList>
            <person name="Mural R.J."/>
            <person name="Istrail S."/>
            <person name="Sutton G.G."/>
            <person name="Florea L."/>
            <person name="Halpern A.L."/>
            <person name="Mobarry C.M."/>
            <person name="Lippert R."/>
            <person name="Walenz B."/>
            <person name="Shatkay H."/>
            <person name="Dew I."/>
            <person name="Miller J.R."/>
            <person name="Flanigan M.J."/>
            <person name="Edwards N.J."/>
            <person name="Bolanos R."/>
            <person name="Fasulo D."/>
            <person name="Halldorsson B.V."/>
            <person name="Hannenhalli S."/>
            <person name="Turner R."/>
            <person name="Yooseph S."/>
            <person name="Lu F."/>
            <person name="Nusskern D.R."/>
            <person name="Shue B.C."/>
            <person name="Zheng X.H."/>
            <person name="Zhong F."/>
            <person name="Delcher A.L."/>
            <person name="Huson D.H."/>
            <person name="Kravitz S.A."/>
            <person name="Mouchard L."/>
            <person name="Reinert K."/>
            <person name="Remington K.A."/>
            <person name="Clark A.G."/>
            <person name="Waterman M.S."/>
            <person name="Eichler E.E."/>
            <person name="Adams M.D."/>
            <person name="Hunkapiller M.W."/>
            <person name="Myers E.W."/>
            <person name="Venter J.C."/>
        </authorList>
    </citation>
    <scope>NUCLEOTIDE SEQUENCE [LARGE SCALE GENOMIC DNA]</scope>
</reference>
<reference key="4">
    <citation type="journal article" date="2004" name="Genome Res.">
        <title>The status, quality, and expansion of the NIH full-length cDNA project: the Mammalian Gene Collection (MGC).</title>
        <authorList>
            <consortium name="The MGC Project Team"/>
        </authorList>
    </citation>
    <scope>NUCLEOTIDE SEQUENCE [LARGE SCALE MRNA] (ISOFORMS 1 AND 2)</scope>
    <scope>VARIANTS GLU-235 AND GLU-302</scope>
    <source>
        <tissue>Muscle</tissue>
        <tissue>Testis</tissue>
    </source>
</reference>